<reference key="1">
    <citation type="journal article" date="2004" name="Science">
        <title>The 1.2-megabase genome sequence of Mimivirus.</title>
        <authorList>
            <person name="Raoult D."/>
            <person name="Audic S."/>
            <person name="Robert C."/>
            <person name="Abergel C."/>
            <person name="Renesto P."/>
            <person name="Ogata H."/>
            <person name="La Scola B."/>
            <person name="Susan M."/>
            <person name="Claverie J.-M."/>
        </authorList>
    </citation>
    <scope>NUCLEOTIDE SEQUENCE [LARGE SCALE GENOMIC DNA]</scope>
    <source>
        <strain>Rowbotham-Bradford</strain>
    </source>
</reference>
<accession>Q5UR67</accession>
<dbReference type="EC" id="3.2.2.-"/>
<dbReference type="EMBL" id="AY653733">
    <property type="protein sequence ID" value="AAV50879.1"/>
    <property type="molecule type" value="Genomic_DNA"/>
</dbReference>
<dbReference type="SMR" id="Q5UR67"/>
<dbReference type="KEGG" id="vg:9925257"/>
<dbReference type="OrthoDB" id="10627at10239"/>
<dbReference type="Proteomes" id="UP000001134">
    <property type="component" value="Genome"/>
</dbReference>
<dbReference type="GO" id="GO:0016798">
    <property type="term" value="F:hydrolase activity, acting on glycosyl bonds"/>
    <property type="evidence" value="ECO:0007669"/>
    <property type="project" value="UniProtKB-KW"/>
</dbReference>
<dbReference type="CDD" id="cd15457">
    <property type="entry name" value="NADAR"/>
    <property type="match status" value="1"/>
</dbReference>
<dbReference type="Gene3D" id="1.10.357.40">
    <property type="entry name" value="YbiA-like"/>
    <property type="match status" value="1"/>
</dbReference>
<dbReference type="InterPro" id="IPR012816">
    <property type="entry name" value="NADAR"/>
</dbReference>
<dbReference type="InterPro" id="IPR037238">
    <property type="entry name" value="YbiA-like_sf"/>
</dbReference>
<dbReference type="NCBIfam" id="TIGR02464">
    <property type="entry name" value="ribofla_fusion"/>
    <property type="match status" value="1"/>
</dbReference>
<dbReference type="Pfam" id="PF08719">
    <property type="entry name" value="NADAR"/>
    <property type="match status" value="1"/>
</dbReference>
<dbReference type="SUPFAM" id="SSF143990">
    <property type="entry name" value="YbiA-like"/>
    <property type="match status" value="1"/>
</dbReference>
<name>RIBX_MIMIV</name>
<evidence type="ECO:0000250" key="1">
    <source>
        <dbReference type="UniProtKB" id="P30176"/>
    </source>
</evidence>
<evidence type="ECO:0000305" key="2"/>
<gene>
    <name type="ordered locus">MIMI_R617</name>
</gene>
<keyword id="KW-0326">Glycosidase</keyword>
<keyword id="KW-0378">Hydrolase</keyword>
<keyword id="KW-1185">Reference proteome</keyword>
<organism>
    <name type="scientific">Acanthamoeba polyphaga mimivirus</name>
    <name type="common">APMV</name>
    <dbReference type="NCBI Taxonomy" id="212035"/>
    <lineage>
        <taxon>Viruses</taxon>
        <taxon>Varidnaviria</taxon>
        <taxon>Bamfordvirae</taxon>
        <taxon>Nucleocytoviricota</taxon>
        <taxon>Megaviricetes</taxon>
        <taxon>Imitervirales</taxon>
        <taxon>Mimiviridae</taxon>
        <taxon>Megamimivirinae</taxon>
        <taxon>Mimivirus</taxon>
        <taxon>Mimivirus bradfordmassiliense</taxon>
    </lineage>
</organism>
<comment type="function">
    <text evidence="1">Catalyzes the hydrolysis of the N-glycosidic bond in the first two intermediates of riboflavin biosynthesis, which are highly reactive metabolites, yielding relatively innocuous products. Thus, can divert a surplus of harmful intermediates into relatively harmless products and pre-empt the damage these intermediates would otherwise do. May act on other substrates in vivo.</text>
</comment>
<comment type="catalytic activity">
    <reaction evidence="1">
        <text>2,5-diamino-6-hydroxy-4-(5-phosphoribosylamino)-pyrimidine + H2O = 2,5,6-triamino-4-hydroxypyrimidine + D-ribose 5-phosphate</text>
        <dbReference type="Rhea" id="RHEA:23436"/>
        <dbReference type="ChEBI" id="CHEBI:15377"/>
        <dbReference type="ChEBI" id="CHEBI:58614"/>
        <dbReference type="ChEBI" id="CHEBI:78346"/>
        <dbReference type="ChEBI" id="CHEBI:137796"/>
    </reaction>
</comment>
<comment type="catalytic activity">
    <reaction evidence="1">
        <text>5-amino-6-(5-phospho-D-ribosylamino)uracil + H2O = 5,6-diaminouracil + D-ribose 5-phosphate</text>
        <dbReference type="Rhea" id="RHEA:55020"/>
        <dbReference type="ChEBI" id="CHEBI:15377"/>
        <dbReference type="ChEBI" id="CHEBI:46252"/>
        <dbReference type="ChEBI" id="CHEBI:58453"/>
        <dbReference type="ChEBI" id="CHEBI:78346"/>
    </reaction>
</comment>
<comment type="similarity">
    <text evidence="2">Belongs to the YbiA family.</text>
</comment>
<proteinExistence type="inferred from homology"/>
<organismHost>
    <name type="scientific">Acanthamoeba polyphaga</name>
    <name type="common">Amoeba</name>
    <dbReference type="NCBI Taxonomy" id="5757"/>
</organismHost>
<sequence length="170" mass="19894">METDKYVFFHGANKNQAGVHIFSQWFPVNFKEYLNGEEFAEYVSAEQYMMAHKALLFGDMFHFKKIMECSKQCKIKYLGRRVRNFNPTIWDKHKFDIVTEGNRLKFSQNPDLMKRLLETGNKTIVEASPSDKIWGIGLTAQQAVNIPENKWPGKNLLGKVLMKIREENQQ</sequence>
<feature type="chain" id="PRO_0000244050" description="N-glycosidase R617">
    <location>
        <begin position="1"/>
        <end position="170"/>
    </location>
</feature>
<protein>
    <recommendedName>
        <fullName>N-glycosidase R617</fullName>
        <ecNumber>3.2.2.-</ecNumber>
    </recommendedName>
    <alternativeName>
        <fullName>Riboflavin biosynthesis intermediates N-glycosidase</fullName>
    </alternativeName>
</protein>